<reference key="1">
    <citation type="journal article" date="2007" name="Proc. Natl. Acad. Sci. U.S.A.">
        <title>The genome of Syntrophus aciditrophicus: life at the thermodynamic limit of microbial growth.</title>
        <authorList>
            <person name="McInerney M.J."/>
            <person name="Rohlin L."/>
            <person name="Mouttaki H."/>
            <person name="Kim U."/>
            <person name="Krupp R.S."/>
            <person name="Rios-Hernandez L."/>
            <person name="Sieber J."/>
            <person name="Struchtemeyer C.G."/>
            <person name="Bhattacharyya A."/>
            <person name="Campbell J.W."/>
            <person name="Gunsalus R.P."/>
        </authorList>
    </citation>
    <scope>NUCLEOTIDE SEQUENCE [LARGE SCALE GENOMIC DNA]</scope>
    <source>
        <strain>SB</strain>
    </source>
</reference>
<sequence length="293" mass="31081">MAAIIIRGSDIAQEIREDLKKEAAWLKAYGVVPGLVTILVGQDPASMSYVTAKQKTACKLGFYSLQDSQPGHVSESLLLDRIARYNKDPRIHGILVQLPLPPHIDEQKILYAIDPGKDVDGFHPYNVGKLMIGQADFLPCTPAGIQQLLIRSGIQTDGAEVVVVGRSNIVGKPIANMLLQKQKGANATVTVCHTGTRDVGVHTRRADILIVAAGKPKAITADMVKEGAVVIDVGVNRVGVTSDGKAKLCGDVDFEPVREKAGAITPVPGGVGPMTITMLMVNTLKAARLSAGL</sequence>
<feature type="chain" id="PRO_0000268541" description="Bifunctional protein FolD">
    <location>
        <begin position="1"/>
        <end position="293"/>
    </location>
</feature>
<feature type="binding site" evidence="1">
    <location>
        <begin position="165"/>
        <end position="167"/>
    </location>
    <ligand>
        <name>NADP(+)</name>
        <dbReference type="ChEBI" id="CHEBI:58349"/>
    </ligand>
</feature>
<feature type="binding site" evidence="1">
    <location>
        <position position="194"/>
    </location>
    <ligand>
        <name>NADP(+)</name>
        <dbReference type="ChEBI" id="CHEBI:58349"/>
    </ligand>
</feature>
<feature type="binding site" evidence="1">
    <location>
        <position position="235"/>
    </location>
    <ligand>
        <name>NADP(+)</name>
        <dbReference type="ChEBI" id="CHEBI:58349"/>
    </ligand>
</feature>
<proteinExistence type="inferred from homology"/>
<evidence type="ECO:0000255" key="1">
    <source>
        <dbReference type="HAMAP-Rule" id="MF_01576"/>
    </source>
</evidence>
<evidence type="ECO:0000305" key="2"/>
<comment type="function">
    <text evidence="1">Catalyzes the oxidation of 5,10-methylenetetrahydrofolate to 5,10-methenyltetrahydrofolate and then the hydrolysis of 5,10-methenyltetrahydrofolate to 10-formyltetrahydrofolate.</text>
</comment>
<comment type="catalytic activity">
    <reaction evidence="1">
        <text>(6R)-5,10-methylene-5,6,7,8-tetrahydrofolate + NADP(+) = (6R)-5,10-methenyltetrahydrofolate + NADPH</text>
        <dbReference type="Rhea" id="RHEA:22812"/>
        <dbReference type="ChEBI" id="CHEBI:15636"/>
        <dbReference type="ChEBI" id="CHEBI:57455"/>
        <dbReference type="ChEBI" id="CHEBI:57783"/>
        <dbReference type="ChEBI" id="CHEBI:58349"/>
        <dbReference type="EC" id="1.5.1.5"/>
    </reaction>
</comment>
<comment type="catalytic activity">
    <reaction evidence="1">
        <text>(6R)-5,10-methenyltetrahydrofolate + H2O = (6R)-10-formyltetrahydrofolate + H(+)</text>
        <dbReference type="Rhea" id="RHEA:23700"/>
        <dbReference type="ChEBI" id="CHEBI:15377"/>
        <dbReference type="ChEBI" id="CHEBI:15378"/>
        <dbReference type="ChEBI" id="CHEBI:57455"/>
        <dbReference type="ChEBI" id="CHEBI:195366"/>
        <dbReference type="EC" id="3.5.4.9"/>
    </reaction>
</comment>
<comment type="pathway">
    <text evidence="1">One-carbon metabolism; tetrahydrofolate interconversion.</text>
</comment>
<comment type="subunit">
    <text evidence="1">Homodimer.</text>
</comment>
<comment type="similarity">
    <text evidence="1">Belongs to the tetrahydrofolate dehydrogenase/cyclohydrolase family.</text>
</comment>
<comment type="sequence caution" evidence="2">
    <conflict type="erroneous initiation">
        <sequence resource="EMBL-CDS" id="ABC77807"/>
    </conflict>
</comment>
<keyword id="KW-0028">Amino-acid biosynthesis</keyword>
<keyword id="KW-0368">Histidine biosynthesis</keyword>
<keyword id="KW-0378">Hydrolase</keyword>
<keyword id="KW-0486">Methionine biosynthesis</keyword>
<keyword id="KW-0511">Multifunctional enzyme</keyword>
<keyword id="KW-0521">NADP</keyword>
<keyword id="KW-0554">One-carbon metabolism</keyword>
<keyword id="KW-0560">Oxidoreductase</keyword>
<keyword id="KW-0658">Purine biosynthesis</keyword>
<keyword id="KW-1185">Reference proteome</keyword>
<gene>
    <name evidence="1" type="primary">folD</name>
    <name type="ordered locus">SYNAS_19280</name>
    <name type="ORF">SYN_02873</name>
</gene>
<dbReference type="EC" id="1.5.1.5" evidence="1"/>
<dbReference type="EC" id="3.5.4.9" evidence="1"/>
<dbReference type="EMBL" id="CP000252">
    <property type="protein sequence ID" value="ABC77807.1"/>
    <property type="status" value="ALT_INIT"/>
    <property type="molecule type" value="Genomic_DNA"/>
</dbReference>
<dbReference type="RefSeq" id="WP_041584935.1">
    <property type="nucleotide sequence ID" value="NC_007759.1"/>
</dbReference>
<dbReference type="SMR" id="Q2LUP9"/>
<dbReference type="FunCoup" id="Q2LUP9">
    <property type="interactions" value="446"/>
</dbReference>
<dbReference type="STRING" id="56780.SYN_02873"/>
<dbReference type="KEGG" id="sat:SYN_02873"/>
<dbReference type="eggNOG" id="COG0190">
    <property type="taxonomic scope" value="Bacteria"/>
</dbReference>
<dbReference type="HOGENOM" id="CLU_034045_2_1_7"/>
<dbReference type="InParanoid" id="Q2LUP9"/>
<dbReference type="OrthoDB" id="9803580at2"/>
<dbReference type="UniPathway" id="UPA00193"/>
<dbReference type="Proteomes" id="UP000001933">
    <property type="component" value="Chromosome"/>
</dbReference>
<dbReference type="GO" id="GO:0005829">
    <property type="term" value="C:cytosol"/>
    <property type="evidence" value="ECO:0007669"/>
    <property type="project" value="TreeGrafter"/>
</dbReference>
<dbReference type="GO" id="GO:0004477">
    <property type="term" value="F:methenyltetrahydrofolate cyclohydrolase activity"/>
    <property type="evidence" value="ECO:0007669"/>
    <property type="project" value="UniProtKB-UniRule"/>
</dbReference>
<dbReference type="GO" id="GO:0004488">
    <property type="term" value="F:methylenetetrahydrofolate dehydrogenase (NADP+) activity"/>
    <property type="evidence" value="ECO:0007669"/>
    <property type="project" value="UniProtKB-UniRule"/>
</dbReference>
<dbReference type="GO" id="GO:0000105">
    <property type="term" value="P:L-histidine biosynthetic process"/>
    <property type="evidence" value="ECO:0007669"/>
    <property type="project" value="UniProtKB-KW"/>
</dbReference>
<dbReference type="GO" id="GO:0009086">
    <property type="term" value="P:methionine biosynthetic process"/>
    <property type="evidence" value="ECO:0007669"/>
    <property type="project" value="UniProtKB-KW"/>
</dbReference>
<dbReference type="GO" id="GO:0006164">
    <property type="term" value="P:purine nucleotide biosynthetic process"/>
    <property type="evidence" value="ECO:0007669"/>
    <property type="project" value="UniProtKB-KW"/>
</dbReference>
<dbReference type="GO" id="GO:0035999">
    <property type="term" value="P:tetrahydrofolate interconversion"/>
    <property type="evidence" value="ECO:0007669"/>
    <property type="project" value="UniProtKB-UniRule"/>
</dbReference>
<dbReference type="CDD" id="cd01080">
    <property type="entry name" value="NAD_bind_m-THF_DH_Cyclohyd"/>
    <property type="match status" value="1"/>
</dbReference>
<dbReference type="FunFam" id="3.40.50.720:FF:000189">
    <property type="entry name" value="Bifunctional protein FolD"/>
    <property type="match status" value="1"/>
</dbReference>
<dbReference type="FunFam" id="3.40.50.10860:FF:000005">
    <property type="entry name" value="C-1-tetrahydrofolate synthase, cytoplasmic, putative"/>
    <property type="match status" value="1"/>
</dbReference>
<dbReference type="Gene3D" id="3.40.50.10860">
    <property type="entry name" value="Leucine Dehydrogenase, chain A, domain 1"/>
    <property type="match status" value="1"/>
</dbReference>
<dbReference type="Gene3D" id="3.40.50.720">
    <property type="entry name" value="NAD(P)-binding Rossmann-like Domain"/>
    <property type="match status" value="1"/>
</dbReference>
<dbReference type="HAMAP" id="MF_01576">
    <property type="entry name" value="THF_DHG_CYH"/>
    <property type="match status" value="1"/>
</dbReference>
<dbReference type="InterPro" id="IPR046346">
    <property type="entry name" value="Aminoacid_DH-like_N_sf"/>
</dbReference>
<dbReference type="InterPro" id="IPR036291">
    <property type="entry name" value="NAD(P)-bd_dom_sf"/>
</dbReference>
<dbReference type="InterPro" id="IPR000672">
    <property type="entry name" value="THF_DH/CycHdrlase"/>
</dbReference>
<dbReference type="InterPro" id="IPR020630">
    <property type="entry name" value="THF_DH/CycHdrlase_cat_dom"/>
</dbReference>
<dbReference type="InterPro" id="IPR020867">
    <property type="entry name" value="THF_DH/CycHdrlase_CS"/>
</dbReference>
<dbReference type="InterPro" id="IPR020631">
    <property type="entry name" value="THF_DH/CycHdrlase_NAD-bd_dom"/>
</dbReference>
<dbReference type="PANTHER" id="PTHR48099:SF5">
    <property type="entry name" value="C-1-TETRAHYDROFOLATE SYNTHASE, CYTOPLASMIC"/>
    <property type="match status" value="1"/>
</dbReference>
<dbReference type="PANTHER" id="PTHR48099">
    <property type="entry name" value="C-1-TETRAHYDROFOLATE SYNTHASE, CYTOPLASMIC-RELATED"/>
    <property type="match status" value="1"/>
</dbReference>
<dbReference type="Pfam" id="PF00763">
    <property type="entry name" value="THF_DHG_CYH"/>
    <property type="match status" value="1"/>
</dbReference>
<dbReference type="Pfam" id="PF02882">
    <property type="entry name" value="THF_DHG_CYH_C"/>
    <property type="match status" value="1"/>
</dbReference>
<dbReference type="PRINTS" id="PR00085">
    <property type="entry name" value="THFDHDRGNASE"/>
</dbReference>
<dbReference type="SUPFAM" id="SSF53223">
    <property type="entry name" value="Aminoacid dehydrogenase-like, N-terminal domain"/>
    <property type="match status" value="1"/>
</dbReference>
<dbReference type="SUPFAM" id="SSF51735">
    <property type="entry name" value="NAD(P)-binding Rossmann-fold domains"/>
    <property type="match status" value="1"/>
</dbReference>
<dbReference type="PROSITE" id="PS00767">
    <property type="entry name" value="THF_DHG_CYH_2"/>
    <property type="match status" value="1"/>
</dbReference>
<protein>
    <recommendedName>
        <fullName evidence="1">Bifunctional protein FolD</fullName>
    </recommendedName>
    <domain>
        <recommendedName>
            <fullName evidence="1">Methylenetetrahydrofolate dehydrogenase</fullName>
            <ecNumber evidence="1">1.5.1.5</ecNumber>
        </recommendedName>
    </domain>
    <domain>
        <recommendedName>
            <fullName evidence="1">Methenyltetrahydrofolate cyclohydrolase</fullName>
            <ecNumber evidence="1">3.5.4.9</ecNumber>
        </recommendedName>
    </domain>
</protein>
<accession>Q2LUP9</accession>
<organism>
    <name type="scientific">Syntrophus aciditrophicus (strain SB)</name>
    <dbReference type="NCBI Taxonomy" id="56780"/>
    <lineage>
        <taxon>Bacteria</taxon>
        <taxon>Pseudomonadati</taxon>
        <taxon>Thermodesulfobacteriota</taxon>
        <taxon>Syntrophia</taxon>
        <taxon>Syntrophales</taxon>
        <taxon>Syntrophaceae</taxon>
        <taxon>Syntrophus</taxon>
    </lineage>
</organism>
<name>FOLD_SYNAS</name>